<gene>
    <name type="primary">Ncapd3</name>
    <name type="synonym">Kiaa0056</name>
</gene>
<protein>
    <recommendedName>
        <fullName>Condensin-2 complex subunit D3</fullName>
    </recommendedName>
    <alternativeName>
        <fullName>Non-SMC condensin II complex subunit D3</fullName>
    </alternativeName>
</protein>
<reference key="1">
    <citation type="journal article" date="2009" name="PLoS Biol.">
        <title>Lineage-specific biology revealed by a finished genome assembly of the mouse.</title>
        <authorList>
            <person name="Church D.M."/>
            <person name="Goodstadt L."/>
            <person name="Hillier L.W."/>
            <person name="Zody M.C."/>
            <person name="Goldstein S."/>
            <person name="She X."/>
            <person name="Bult C.J."/>
            <person name="Agarwala R."/>
            <person name="Cherry J.L."/>
            <person name="DiCuccio M."/>
            <person name="Hlavina W."/>
            <person name="Kapustin Y."/>
            <person name="Meric P."/>
            <person name="Maglott D."/>
            <person name="Birtle Z."/>
            <person name="Marques A.C."/>
            <person name="Graves T."/>
            <person name="Zhou S."/>
            <person name="Teague B."/>
            <person name="Potamousis K."/>
            <person name="Churas C."/>
            <person name="Place M."/>
            <person name="Herschleb J."/>
            <person name="Runnheim R."/>
            <person name="Forrest D."/>
            <person name="Amos-Landgraf J."/>
            <person name="Schwartz D.C."/>
            <person name="Cheng Z."/>
            <person name="Lindblad-Toh K."/>
            <person name="Eichler E.E."/>
            <person name="Ponting C.P."/>
        </authorList>
    </citation>
    <scope>NUCLEOTIDE SEQUENCE [LARGE SCALE GENOMIC DNA]</scope>
    <source>
        <strain>C57BL/6J</strain>
    </source>
</reference>
<reference key="2">
    <citation type="journal article" date="2005" name="Science">
        <title>The transcriptional landscape of the mammalian genome.</title>
        <authorList>
            <person name="Carninci P."/>
            <person name="Kasukawa T."/>
            <person name="Katayama S."/>
            <person name="Gough J."/>
            <person name="Frith M.C."/>
            <person name="Maeda N."/>
            <person name="Oyama R."/>
            <person name="Ravasi T."/>
            <person name="Lenhard B."/>
            <person name="Wells C."/>
            <person name="Kodzius R."/>
            <person name="Shimokawa K."/>
            <person name="Bajic V.B."/>
            <person name="Brenner S.E."/>
            <person name="Batalov S."/>
            <person name="Forrest A.R."/>
            <person name="Zavolan M."/>
            <person name="Davis M.J."/>
            <person name="Wilming L.G."/>
            <person name="Aidinis V."/>
            <person name="Allen J.E."/>
            <person name="Ambesi-Impiombato A."/>
            <person name="Apweiler R."/>
            <person name="Aturaliya R.N."/>
            <person name="Bailey T.L."/>
            <person name="Bansal M."/>
            <person name="Baxter L."/>
            <person name="Beisel K.W."/>
            <person name="Bersano T."/>
            <person name="Bono H."/>
            <person name="Chalk A.M."/>
            <person name="Chiu K.P."/>
            <person name="Choudhary V."/>
            <person name="Christoffels A."/>
            <person name="Clutterbuck D.R."/>
            <person name="Crowe M.L."/>
            <person name="Dalla E."/>
            <person name="Dalrymple B.P."/>
            <person name="de Bono B."/>
            <person name="Della Gatta G."/>
            <person name="di Bernardo D."/>
            <person name="Down T."/>
            <person name="Engstrom P."/>
            <person name="Fagiolini M."/>
            <person name="Faulkner G."/>
            <person name="Fletcher C.F."/>
            <person name="Fukushima T."/>
            <person name="Furuno M."/>
            <person name="Futaki S."/>
            <person name="Gariboldi M."/>
            <person name="Georgii-Hemming P."/>
            <person name="Gingeras T.R."/>
            <person name="Gojobori T."/>
            <person name="Green R.E."/>
            <person name="Gustincich S."/>
            <person name="Harbers M."/>
            <person name="Hayashi Y."/>
            <person name="Hensch T.K."/>
            <person name="Hirokawa N."/>
            <person name="Hill D."/>
            <person name="Huminiecki L."/>
            <person name="Iacono M."/>
            <person name="Ikeo K."/>
            <person name="Iwama A."/>
            <person name="Ishikawa T."/>
            <person name="Jakt M."/>
            <person name="Kanapin A."/>
            <person name="Katoh M."/>
            <person name="Kawasawa Y."/>
            <person name="Kelso J."/>
            <person name="Kitamura H."/>
            <person name="Kitano H."/>
            <person name="Kollias G."/>
            <person name="Krishnan S.P."/>
            <person name="Kruger A."/>
            <person name="Kummerfeld S.K."/>
            <person name="Kurochkin I.V."/>
            <person name="Lareau L.F."/>
            <person name="Lazarevic D."/>
            <person name="Lipovich L."/>
            <person name="Liu J."/>
            <person name="Liuni S."/>
            <person name="McWilliam S."/>
            <person name="Madan Babu M."/>
            <person name="Madera M."/>
            <person name="Marchionni L."/>
            <person name="Matsuda H."/>
            <person name="Matsuzawa S."/>
            <person name="Miki H."/>
            <person name="Mignone F."/>
            <person name="Miyake S."/>
            <person name="Morris K."/>
            <person name="Mottagui-Tabar S."/>
            <person name="Mulder N."/>
            <person name="Nakano N."/>
            <person name="Nakauchi H."/>
            <person name="Ng P."/>
            <person name="Nilsson R."/>
            <person name="Nishiguchi S."/>
            <person name="Nishikawa S."/>
            <person name="Nori F."/>
            <person name="Ohara O."/>
            <person name="Okazaki Y."/>
            <person name="Orlando V."/>
            <person name="Pang K.C."/>
            <person name="Pavan W.J."/>
            <person name="Pavesi G."/>
            <person name="Pesole G."/>
            <person name="Petrovsky N."/>
            <person name="Piazza S."/>
            <person name="Reed J."/>
            <person name="Reid J.F."/>
            <person name="Ring B.Z."/>
            <person name="Ringwald M."/>
            <person name="Rost B."/>
            <person name="Ruan Y."/>
            <person name="Salzberg S.L."/>
            <person name="Sandelin A."/>
            <person name="Schneider C."/>
            <person name="Schoenbach C."/>
            <person name="Sekiguchi K."/>
            <person name="Semple C.A."/>
            <person name="Seno S."/>
            <person name="Sessa L."/>
            <person name="Sheng Y."/>
            <person name="Shibata Y."/>
            <person name="Shimada H."/>
            <person name="Shimada K."/>
            <person name="Silva D."/>
            <person name="Sinclair B."/>
            <person name="Sperling S."/>
            <person name="Stupka E."/>
            <person name="Sugiura K."/>
            <person name="Sultana R."/>
            <person name="Takenaka Y."/>
            <person name="Taki K."/>
            <person name="Tammoja K."/>
            <person name="Tan S.L."/>
            <person name="Tang S."/>
            <person name="Taylor M.S."/>
            <person name="Tegner J."/>
            <person name="Teichmann S.A."/>
            <person name="Ueda H.R."/>
            <person name="van Nimwegen E."/>
            <person name="Verardo R."/>
            <person name="Wei C.L."/>
            <person name="Yagi K."/>
            <person name="Yamanishi H."/>
            <person name="Zabarovsky E."/>
            <person name="Zhu S."/>
            <person name="Zimmer A."/>
            <person name="Hide W."/>
            <person name="Bult C."/>
            <person name="Grimmond S.M."/>
            <person name="Teasdale R.D."/>
            <person name="Liu E.T."/>
            <person name="Brusic V."/>
            <person name="Quackenbush J."/>
            <person name="Wahlestedt C."/>
            <person name="Mattick J.S."/>
            <person name="Hume D.A."/>
            <person name="Kai C."/>
            <person name="Sasaki D."/>
            <person name="Tomaru Y."/>
            <person name="Fukuda S."/>
            <person name="Kanamori-Katayama M."/>
            <person name="Suzuki M."/>
            <person name="Aoki J."/>
            <person name="Arakawa T."/>
            <person name="Iida J."/>
            <person name="Imamura K."/>
            <person name="Itoh M."/>
            <person name="Kato T."/>
            <person name="Kawaji H."/>
            <person name="Kawagashira N."/>
            <person name="Kawashima T."/>
            <person name="Kojima M."/>
            <person name="Kondo S."/>
            <person name="Konno H."/>
            <person name="Nakano K."/>
            <person name="Ninomiya N."/>
            <person name="Nishio T."/>
            <person name="Okada M."/>
            <person name="Plessy C."/>
            <person name="Shibata K."/>
            <person name="Shiraki T."/>
            <person name="Suzuki S."/>
            <person name="Tagami M."/>
            <person name="Waki K."/>
            <person name="Watahiki A."/>
            <person name="Okamura-Oho Y."/>
            <person name="Suzuki H."/>
            <person name="Kawai J."/>
            <person name="Hayashizaki Y."/>
        </authorList>
    </citation>
    <scope>NUCLEOTIDE SEQUENCE [LARGE SCALE MRNA] OF 1-157</scope>
    <source>
        <strain>C57BL/6J</strain>
    </source>
</reference>
<reference key="3">
    <citation type="journal article" date="2003" name="DNA Res.">
        <title>Prediction of the coding sequences of mouse homologues of KIAA gene: III. The complete nucleotide sequences of 500 mouse KIAA-homologous cDNAs identified by screening of terminal sequences of cDNA clones randomly sampled from size-fractionated libraries.</title>
        <authorList>
            <person name="Okazaki N."/>
            <person name="Kikuno R."/>
            <person name="Ohara R."/>
            <person name="Inamoto S."/>
            <person name="Koseki H."/>
            <person name="Hiraoka S."/>
            <person name="Saga Y."/>
            <person name="Nagase T."/>
            <person name="Ohara O."/>
            <person name="Koga H."/>
        </authorList>
    </citation>
    <scope>NUCLEOTIDE SEQUENCE [LARGE SCALE MRNA] OF 2-1506</scope>
    <source>
        <tissue>Fetal brain</tissue>
    </source>
</reference>
<reference key="4">
    <citation type="submission" date="2009-01" db="UniProtKB">
        <authorList>
            <person name="Lubec G."/>
            <person name="Sunyer B."/>
            <person name="Chen W.-Q."/>
        </authorList>
    </citation>
    <scope>PROTEIN SEQUENCE OF 1499-1506</scope>
    <scope>IDENTIFICATION BY MASS SPECTROMETRY</scope>
    <source>
        <strain>OF1</strain>
        <tissue>Hippocampus</tissue>
    </source>
</reference>
<reference key="5">
    <citation type="journal article" date="2010" name="Cell">
        <title>A tissue-specific atlas of mouse protein phosphorylation and expression.</title>
        <authorList>
            <person name="Huttlin E.L."/>
            <person name="Jedrychowski M.P."/>
            <person name="Elias J.E."/>
            <person name="Goswami T."/>
            <person name="Rad R."/>
            <person name="Beausoleil S.A."/>
            <person name="Villen J."/>
            <person name="Haas W."/>
            <person name="Sowa M.E."/>
            <person name="Gygi S.P."/>
        </authorList>
    </citation>
    <scope>IDENTIFICATION BY MASS SPECTROMETRY [LARGE SCALE ANALYSIS]</scope>
    <source>
        <tissue>Lung</tissue>
        <tissue>Spleen</tissue>
        <tissue>Testis</tissue>
    </source>
</reference>
<evidence type="ECO:0000250" key="1"/>
<evidence type="ECO:0000250" key="2">
    <source>
        <dbReference type="UniProtKB" id="P42695"/>
    </source>
</evidence>
<evidence type="ECO:0000255" key="3"/>
<evidence type="ECO:0000256" key="4">
    <source>
        <dbReference type="SAM" id="MobiDB-lite"/>
    </source>
</evidence>
<evidence type="ECO:0000305" key="5"/>
<keyword id="KW-0131">Cell cycle</keyword>
<keyword id="KW-0132">Cell division</keyword>
<keyword id="KW-0175">Coiled coil</keyword>
<keyword id="KW-0903">Direct protein sequencing</keyword>
<keyword id="KW-0226">DNA condensation</keyword>
<keyword id="KW-0498">Mitosis</keyword>
<keyword id="KW-0539">Nucleus</keyword>
<keyword id="KW-0597">Phosphoprotein</keyword>
<keyword id="KW-1185">Reference proteome</keyword>
<keyword id="KW-0677">Repeat</keyword>
<proteinExistence type="evidence at protein level"/>
<dbReference type="EMBL" id="AC156163">
    <property type="status" value="NOT_ANNOTATED_CDS"/>
    <property type="molecule type" value="Genomic_DNA"/>
</dbReference>
<dbReference type="EMBL" id="CT025660">
    <property type="status" value="NOT_ANNOTATED_CDS"/>
    <property type="molecule type" value="Genomic_DNA"/>
</dbReference>
<dbReference type="EMBL" id="AK019297">
    <property type="protein sequence ID" value="BAB31654.1"/>
    <property type="molecule type" value="mRNA"/>
</dbReference>
<dbReference type="EMBL" id="AK129046">
    <property type="protein sequence ID" value="BAC97856.1"/>
    <property type="molecule type" value="mRNA"/>
</dbReference>
<dbReference type="CCDS" id="CCDS57665.1"/>
<dbReference type="RefSeq" id="NP_835214.2">
    <property type="nucleotide sequence ID" value="NM_178113.3"/>
</dbReference>
<dbReference type="BioGRID" id="219559">
    <property type="interactions" value="9"/>
</dbReference>
<dbReference type="ComplexPortal" id="CPX-986">
    <property type="entry name" value="Condensin II complex"/>
</dbReference>
<dbReference type="FunCoup" id="Q6ZQK0">
    <property type="interactions" value="1351"/>
</dbReference>
<dbReference type="IntAct" id="Q6ZQK0">
    <property type="interactions" value="2"/>
</dbReference>
<dbReference type="MINT" id="Q6ZQK0"/>
<dbReference type="STRING" id="10090.ENSMUSP00000072871"/>
<dbReference type="GlyGen" id="Q6ZQK0">
    <property type="glycosylation" value="3 sites, 1 N-linked glycan (1 site), 1 O-linked glycan (1 site)"/>
</dbReference>
<dbReference type="iPTMnet" id="Q6ZQK0"/>
<dbReference type="PhosphoSitePlus" id="Q6ZQK0"/>
<dbReference type="jPOST" id="Q6ZQK0"/>
<dbReference type="PaxDb" id="10090-ENSMUSP00000072871"/>
<dbReference type="ProteomicsDB" id="283646"/>
<dbReference type="Pumba" id="Q6ZQK0"/>
<dbReference type="DNASU" id="78658"/>
<dbReference type="GeneID" id="78658"/>
<dbReference type="KEGG" id="mmu:78658"/>
<dbReference type="AGR" id="MGI:2142989"/>
<dbReference type="CTD" id="23310"/>
<dbReference type="MGI" id="MGI:2142989">
    <property type="gene designation" value="Ncapd3"/>
</dbReference>
<dbReference type="eggNOG" id="KOG0413">
    <property type="taxonomic scope" value="Eukaryota"/>
</dbReference>
<dbReference type="InParanoid" id="Q6ZQK0"/>
<dbReference type="OrthoDB" id="10263978at2759"/>
<dbReference type="Reactome" id="R-MMU-2299718">
    <property type="pathway name" value="Condensation of Prophase Chromosomes"/>
</dbReference>
<dbReference type="BioGRID-ORCS" id="78658">
    <property type="hits" value="20 hits in 78 CRISPR screens"/>
</dbReference>
<dbReference type="ChiTaRS" id="Ncapd3">
    <property type="organism name" value="mouse"/>
</dbReference>
<dbReference type="PRO" id="PR:Q6ZQK0"/>
<dbReference type="Proteomes" id="UP000000589">
    <property type="component" value="Unplaced"/>
</dbReference>
<dbReference type="RNAct" id="Q6ZQK0">
    <property type="molecule type" value="protein"/>
</dbReference>
<dbReference type="GO" id="GO:0000793">
    <property type="term" value="C:condensed chromosome"/>
    <property type="evidence" value="ECO:0000314"/>
    <property type="project" value="MGI"/>
</dbReference>
<dbReference type="GO" id="GO:0000794">
    <property type="term" value="C:condensed nuclear chromosome"/>
    <property type="evidence" value="ECO:0000314"/>
    <property type="project" value="ComplexPortal"/>
</dbReference>
<dbReference type="GO" id="GO:0000796">
    <property type="term" value="C:condensin complex"/>
    <property type="evidence" value="ECO:0000314"/>
    <property type="project" value="MGI"/>
</dbReference>
<dbReference type="GO" id="GO:0042585">
    <property type="term" value="C:germinal vesicle"/>
    <property type="evidence" value="ECO:0000314"/>
    <property type="project" value="MGI"/>
</dbReference>
<dbReference type="GO" id="GO:0000776">
    <property type="term" value="C:kinetochore"/>
    <property type="evidence" value="ECO:0000314"/>
    <property type="project" value="MGI"/>
</dbReference>
<dbReference type="GO" id="GO:0051301">
    <property type="term" value="P:cell division"/>
    <property type="evidence" value="ECO:0007669"/>
    <property type="project" value="UniProtKB-KW"/>
</dbReference>
<dbReference type="GO" id="GO:0051307">
    <property type="term" value="P:meiotic chromosome separation"/>
    <property type="evidence" value="ECO:0000315"/>
    <property type="project" value="MGI"/>
</dbReference>
<dbReference type="GO" id="GO:0007076">
    <property type="term" value="P:mitotic chromosome condensation"/>
    <property type="evidence" value="ECO:0000250"/>
    <property type="project" value="UniProtKB"/>
</dbReference>
<dbReference type="GO" id="GO:1905821">
    <property type="term" value="P:positive regulation of chromosome condensation"/>
    <property type="evidence" value="ECO:0000250"/>
    <property type="project" value="ComplexPortal"/>
</dbReference>
<dbReference type="GO" id="GO:0051984">
    <property type="term" value="P:positive regulation of chromosome segregation"/>
    <property type="evidence" value="ECO:0000315"/>
    <property type="project" value="ComplexPortal"/>
</dbReference>
<dbReference type="GO" id="GO:1905820">
    <property type="term" value="P:positive regulation of chromosome separation"/>
    <property type="evidence" value="ECO:0000315"/>
    <property type="project" value="ComplexPortal"/>
</dbReference>
<dbReference type="FunFam" id="1.25.10.10:FF:000319">
    <property type="entry name" value="Condensin-2 complex subunit D3"/>
    <property type="match status" value="1"/>
</dbReference>
<dbReference type="FunFam" id="1.25.10.10:FF:000345">
    <property type="entry name" value="Condensin-2 complex subunit D3"/>
    <property type="match status" value="1"/>
</dbReference>
<dbReference type="FunFam" id="1.25.10.10:FF:000611">
    <property type="entry name" value="Condensin-2 complex subunit D3"/>
    <property type="match status" value="1"/>
</dbReference>
<dbReference type="Gene3D" id="1.25.10.10">
    <property type="entry name" value="Leucine-rich Repeat Variant"/>
    <property type="match status" value="3"/>
</dbReference>
<dbReference type="InterPro" id="IPR011989">
    <property type="entry name" value="ARM-like"/>
</dbReference>
<dbReference type="InterPro" id="IPR016024">
    <property type="entry name" value="ARM-type_fold"/>
</dbReference>
<dbReference type="InterPro" id="IPR026971">
    <property type="entry name" value="CND1/NCAPD3"/>
</dbReference>
<dbReference type="InterPro" id="IPR032682">
    <property type="entry name" value="Cnd1_C"/>
</dbReference>
<dbReference type="InterPro" id="IPR012371">
    <property type="entry name" value="NCAPD3"/>
</dbReference>
<dbReference type="PANTHER" id="PTHR14222">
    <property type="entry name" value="CONDENSIN"/>
    <property type="match status" value="1"/>
</dbReference>
<dbReference type="PANTHER" id="PTHR14222:SF1">
    <property type="entry name" value="CONDENSIN-2 COMPLEX SUBUNIT D3"/>
    <property type="match status" value="1"/>
</dbReference>
<dbReference type="Pfam" id="PF12717">
    <property type="entry name" value="Cnd1"/>
    <property type="match status" value="1"/>
</dbReference>
<dbReference type="PIRSF" id="PIRSF036508">
    <property type="entry name" value="Condns_HCP-6"/>
    <property type="match status" value="1"/>
</dbReference>
<dbReference type="SUPFAM" id="SSF48371">
    <property type="entry name" value="ARM repeat"/>
    <property type="match status" value="1"/>
</dbReference>
<organism>
    <name type="scientific">Mus musculus</name>
    <name type="common">Mouse</name>
    <dbReference type="NCBI Taxonomy" id="10090"/>
    <lineage>
        <taxon>Eukaryota</taxon>
        <taxon>Metazoa</taxon>
        <taxon>Chordata</taxon>
        <taxon>Craniata</taxon>
        <taxon>Vertebrata</taxon>
        <taxon>Euteleostomi</taxon>
        <taxon>Mammalia</taxon>
        <taxon>Eutheria</taxon>
        <taxon>Euarchontoglires</taxon>
        <taxon>Glires</taxon>
        <taxon>Rodentia</taxon>
        <taxon>Myomorpha</taxon>
        <taxon>Muroidea</taxon>
        <taxon>Muridae</taxon>
        <taxon>Murinae</taxon>
        <taxon>Mus</taxon>
        <taxon>Mus</taxon>
    </lineage>
</organism>
<accession>Q6ZQK0</accession>
<accession>E9QPR0</accession>
<accession>Q9CS21</accession>
<sequence length="1506" mass="169432">MALQDLGENLQPWCPLGLSLEWVKTVWDLDFTEIEPLDPSIVGEILETGRDAFTKLYGSLFPFATDESGSLESIWTFFTENDISSNTLVALFCHFVQEAHKKSASAQYREYGLHAAGLYFLLLEIPGIVVNQVFHPVMFDKCIQILKRSWPQESNLTQKRKKDHSKSSKDNYRKSRKRGKPPRKEDYQVDELSREEEEEEEEIYFSGRDLCQIRDAIFNLLKNFLRLLPKFSLKEKPQSIQTCIEVFVALTSFEPIPHKFLISQARNLNEVKHISELAYYGLYLLCSPVHGEENKVIGSIFHQMLNVILMLEVGEGSRCAPLAITSQVINCRNQAVQFVSSLVDELQASVYPVLGTLLQHICAKVVDKAEYRTYAAQSLVQLLTKLPSEEYATFIAWLYKYSRSSKIPHRVFTLDVALALLTLPERELDDTVSLEHQKFLKHKFFVQEIIFDRCLDKAPTVRSKALSSFAHCLELSSSNTSESILEIFINSNLVPGIQNLSNTVLNPSPVLTSRNGYSAQSRTHNNDEQTLPGERCFMTMLRKRIKDEKINVRKSALQVLMSILKHCDILSMEQDLLILQDHCRDPAISVRKQALQSLTELVMAQPTCVPVQKAWLMGVIPVVMDCESTVQEKALECLDQLLLQNIKHHKKFHSADRSQVLAWSLLALLTIENQDLRRYLNKAFHIWSKKDKFSSTFINSVISHTDTERSAPAWMLLSKITCSSPKLDYTKIIESWERLSREQSPNSNTLGYMLCVIGHIAKHLPKGTRDKITGVIKAKLNGFQWSPELISSSVDALQKLCRASAKTVLEEQGLLKQVCGDVLATCEQHLSNILLKEDGTGNMDEGLVVKCIFTLGDIAQLCPAIVEKRVFLLIQSILASSAHSDHLPSSQGTTDALDSQPPFQPRSSAMPSVIRAHAIITLGKLCLQHEDLAKKSIPALVRELEVSEDVAVRNNVIIVICDLCIRYTVMVDNYIPNISVCLKDSDPFIRKQTLVLLTNLLQEEYVKWKGSLFFRFVSTLVDSHPDIASLGEFCLAHLLLKRNPTMFFQHFIECIFHFNSYEKHGQYNKFSQSERGKQLFLLKGKTNKEKRMRIYKFLLEHFTDEQRFNVTSKICLNILACFTDGILPMDMEASELLSDTFDILNSKEIKLLAMRAQTSKDLLEEDDVALANVVMQEAQMKIISQVQKRNFIENIIPIIISLKTVLEKNKIPALRELMNYLREVMQDYRDEINDFFAVDKQLASELEYDMKKYNEQLAQEQALTEHANATKGPEDSDRVPSAQVAPDLEAVPALAAAPMAAAAAAAPMAAAAAAAGQDNADVPPTQSRPSAPRSNFTPTLPPISENGPLKIMSSTRPMSLSTIAILNSVKKAVASKNRTRSLGALPFNVETGSPENPSSHESSLSLEKESDRTVNHVTKRAISTPENSISDVTFAAGVSYIGTPATFFTKEKHEAQEQGSDILCLSLLDKRPPQSPQWNVKSPARSHGSTRSSRRSLRKAPLKTAN</sequence>
<name>CNDD3_MOUSE</name>
<feature type="chain" id="PRO_0000050717" description="Condensin-2 complex subunit D3">
    <location>
        <begin position="1"/>
        <end position="1506"/>
    </location>
</feature>
<feature type="repeat" description="HEAT 1">
    <location>
        <begin position="442"/>
        <end position="476"/>
    </location>
</feature>
<feature type="repeat" description="HEAT 2">
    <location>
        <begin position="532"/>
        <end position="567"/>
    </location>
</feature>
<feature type="repeat" description="HEAT 3">
    <location>
        <begin position="574"/>
        <end position="605"/>
    </location>
</feature>
<feature type="repeat" description="HEAT 4">
    <location>
        <begin position="968"/>
        <end position="1004"/>
    </location>
</feature>
<feature type="region of interest" description="Disordered" evidence="4">
    <location>
        <begin position="154"/>
        <end position="194"/>
    </location>
</feature>
<feature type="region of interest" description="Disordered" evidence="4">
    <location>
        <begin position="884"/>
        <end position="908"/>
    </location>
</feature>
<feature type="region of interest" description="Disordered" evidence="4">
    <location>
        <begin position="1317"/>
        <end position="1353"/>
    </location>
</feature>
<feature type="region of interest" description="Disordered" evidence="4">
    <location>
        <begin position="1385"/>
        <end position="1412"/>
    </location>
</feature>
<feature type="region of interest" description="Disordered" evidence="4">
    <location>
        <begin position="1473"/>
        <end position="1506"/>
    </location>
</feature>
<feature type="coiled-coil region" evidence="3">
    <location>
        <begin position="1213"/>
        <end position="1270"/>
    </location>
</feature>
<feature type="compositionally biased region" description="Polar residues" evidence="4">
    <location>
        <begin position="884"/>
        <end position="897"/>
    </location>
</feature>
<feature type="compositionally biased region" description="Polar residues" evidence="4">
    <location>
        <begin position="1324"/>
        <end position="1338"/>
    </location>
</feature>
<feature type="compositionally biased region" description="Low complexity" evidence="4">
    <location>
        <begin position="1393"/>
        <end position="1405"/>
    </location>
</feature>
<feature type="compositionally biased region" description="Basic residues" evidence="4">
    <location>
        <begin position="1492"/>
        <end position="1506"/>
    </location>
</feature>
<feature type="modified residue" description="Phosphoserine" evidence="2">
    <location>
        <position position="562"/>
    </location>
</feature>
<feature type="modified residue" description="Phosphoserine" evidence="2">
    <location>
        <position position="1359"/>
    </location>
</feature>
<feature type="modified residue" description="Phosphoserine" evidence="2">
    <location>
        <position position="1368"/>
    </location>
</feature>
<feature type="modified residue" description="Phosphoserine" evidence="2">
    <location>
        <position position="1381"/>
    </location>
</feature>
<feature type="modified residue" description="Phosphoserine" evidence="2">
    <location>
        <position position="1393"/>
    </location>
</feature>
<feature type="sequence conflict" description="In Ref. 2; BAB31654 and 3; BAC97856." evidence="5" ref="2 3">
    <original>I</original>
    <variation>S</variation>
    <location>
        <position position="128"/>
    </location>
</feature>
<feature type="sequence conflict" description="In Ref. 3; BAC97856." evidence="5" ref="3">
    <original>T</original>
    <variation>E</variation>
    <location>
        <position position="422"/>
    </location>
</feature>
<comment type="function">
    <text evidence="2">Regulatory subunit of the condensin-2 complex, a complex which establishes mitotic chromosome architecture and is involved in physical rigidity of the chromatid axis. May promote the resolution of double-strand DNA catenanes (intertwines) between sister chromatids. Condensin-mediated compaction likely increases tension in catenated sister chromatids, providing directionality for type II topoisomerase-mediated strand exchanges toward chromatid decatenation. Specifically required for decatenation of centromeric ultrafine DNA bridges during anaphase. Early in neurogenesis, may play an essential role to ensure accurate mitotic chromosome condensation in neuron stem cells, ultimately affecting neuron pool and cortex size.</text>
</comment>
<comment type="subunit">
    <text evidence="1">Component of the condensin-2 complex, which contains the SMC2 and SMC4 heterodimer, and 3 non SMC subunits that probably regulate the complex: NCAPH2, NCAPD3 and NCAPG2.</text>
</comment>
<comment type="subcellular location">
    <subcellularLocation>
        <location evidence="1">Nucleus</location>
    </subcellularLocation>
</comment>